<feature type="chain" id="PRO_1000082957" description="UPF0251 protein Ssed_3913">
    <location>
        <begin position="1"/>
        <end position="96"/>
    </location>
</feature>
<evidence type="ECO:0000255" key="1">
    <source>
        <dbReference type="HAMAP-Rule" id="MF_00674"/>
    </source>
</evidence>
<dbReference type="EMBL" id="CP000821">
    <property type="protein sequence ID" value="ABV38517.1"/>
    <property type="molecule type" value="Genomic_DNA"/>
</dbReference>
<dbReference type="RefSeq" id="WP_012144247.1">
    <property type="nucleotide sequence ID" value="NC_009831.1"/>
</dbReference>
<dbReference type="SMR" id="A8G094"/>
<dbReference type="STRING" id="425104.Ssed_3913"/>
<dbReference type="KEGG" id="sse:Ssed_3913"/>
<dbReference type="eggNOG" id="COG1342">
    <property type="taxonomic scope" value="Bacteria"/>
</dbReference>
<dbReference type="HOGENOM" id="CLU_094511_2_1_6"/>
<dbReference type="OrthoDB" id="280278at2"/>
<dbReference type="Proteomes" id="UP000002015">
    <property type="component" value="Chromosome"/>
</dbReference>
<dbReference type="Gene3D" id="1.10.10.10">
    <property type="entry name" value="Winged helix-like DNA-binding domain superfamily/Winged helix DNA-binding domain"/>
    <property type="match status" value="1"/>
</dbReference>
<dbReference type="HAMAP" id="MF_00674">
    <property type="entry name" value="UPF0251"/>
    <property type="match status" value="1"/>
</dbReference>
<dbReference type="InterPro" id="IPR013324">
    <property type="entry name" value="RNA_pol_sigma_r3/r4-like"/>
</dbReference>
<dbReference type="InterPro" id="IPR002852">
    <property type="entry name" value="UPF0251"/>
</dbReference>
<dbReference type="InterPro" id="IPR036388">
    <property type="entry name" value="WH-like_DNA-bd_sf"/>
</dbReference>
<dbReference type="PANTHER" id="PTHR37478">
    <property type="match status" value="1"/>
</dbReference>
<dbReference type="PANTHER" id="PTHR37478:SF2">
    <property type="entry name" value="UPF0251 PROTEIN TK0562"/>
    <property type="match status" value="1"/>
</dbReference>
<dbReference type="Pfam" id="PF02001">
    <property type="entry name" value="DUF134"/>
    <property type="match status" value="1"/>
</dbReference>
<dbReference type="SUPFAM" id="SSF88659">
    <property type="entry name" value="Sigma3 and sigma4 domains of RNA polymerase sigma factors"/>
    <property type="match status" value="1"/>
</dbReference>
<accession>A8G094</accession>
<comment type="similarity">
    <text evidence="1">Belongs to the UPF0251 family.</text>
</comment>
<protein>
    <recommendedName>
        <fullName evidence="1">UPF0251 protein Ssed_3913</fullName>
    </recommendedName>
</protein>
<name>Y3913_SHESH</name>
<reference key="1">
    <citation type="submission" date="2007-08" db="EMBL/GenBank/DDBJ databases">
        <title>Complete sequence of Shewanella sediminis HAW-EB3.</title>
        <authorList>
            <consortium name="US DOE Joint Genome Institute"/>
            <person name="Copeland A."/>
            <person name="Lucas S."/>
            <person name="Lapidus A."/>
            <person name="Barry K."/>
            <person name="Glavina del Rio T."/>
            <person name="Dalin E."/>
            <person name="Tice H."/>
            <person name="Pitluck S."/>
            <person name="Chertkov O."/>
            <person name="Brettin T."/>
            <person name="Bruce D."/>
            <person name="Detter J.C."/>
            <person name="Han C."/>
            <person name="Schmutz J."/>
            <person name="Larimer F."/>
            <person name="Land M."/>
            <person name="Hauser L."/>
            <person name="Kyrpides N."/>
            <person name="Kim E."/>
            <person name="Zhao J.-S."/>
            <person name="Richardson P."/>
        </authorList>
    </citation>
    <scope>NUCLEOTIDE SEQUENCE [LARGE SCALE GENOMIC DNA]</scope>
    <source>
        <strain>HAW-EB3</strain>
    </source>
</reference>
<gene>
    <name type="ordered locus">Ssed_3913</name>
</gene>
<sequence length="96" mass="10581">MPRPRKCRRLSACVPCSMFKPNGIPSVELTKIQLEADEFEALNLGDVEKMSQLDAAARMGISRQTFGNLLASARKKVATAITRGHALVLPQERQES</sequence>
<keyword id="KW-1185">Reference proteome</keyword>
<proteinExistence type="inferred from homology"/>
<organism>
    <name type="scientific">Shewanella sediminis (strain HAW-EB3)</name>
    <dbReference type="NCBI Taxonomy" id="425104"/>
    <lineage>
        <taxon>Bacteria</taxon>
        <taxon>Pseudomonadati</taxon>
        <taxon>Pseudomonadota</taxon>
        <taxon>Gammaproteobacteria</taxon>
        <taxon>Alteromonadales</taxon>
        <taxon>Shewanellaceae</taxon>
        <taxon>Shewanella</taxon>
    </lineage>
</organism>